<name>NUSG_LACLA</name>
<accession>Q9CDV7</accession>
<organism>
    <name type="scientific">Lactococcus lactis subsp. lactis (strain IL1403)</name>
    <name type="common">Streptococcus lactis</name>
    <dbReference type="NCBI Taxonomy" id="272623"/>
    <lineage>
        <taxon>Bacteria</taxon>
        <taxon>Bacillati</taxon>
        <taxon>Bacillota</taxon>
        <taxon>Bacilli</taxon>
        <taxon>Lactobacillales</taxon>
        <taxon>Streptococcaceae</taxon>
        <taxon>Lactococcus</taxon>
    </lineage>
</organism>
<sequence>MEDNNLVSFDQGWFVIQTYAGYERKVKEDLLERAELYNMADKILRVEIPTETIRTEVNGKMKEVEENLFPGYVLVEMNMTDEAWFIVRNTPNVTGFVGSHGNRSKPTPLFEQEIQDILVGMGKVVREIDFDVFVGKRVRIVDGAFSGFEAPITEINGDKLTLTVDMFGRATPVELDMHQIEDIQA</sequence>
<gene>
    <name evidence="1" type="primary">nusG</name>
    <name type="ordered locus">LL2104</name>
    <name type="ORF">L157316</name>
</gene>
<reference key="1">
    <citation type="journal article" date="2001" name="Genome Res.">
        <title>The complete genome sequence of the lactic acid bacterium Lactococcus lactis ssp. lactis IL1403.</title>
        <authorList>
            <person name="Bolotin A."/>
            <person name="Wincker P."/>
            <person name="Mauger S."/>
            <person name="Jaillon O."/>
            <person name="Malarme K."/>
            <person name="Weissenbach J."/>
            <person name="Ehrlich S.D."/>
            <person name="Sorokin A."/>
        </authorList>
    </citation>
    <scope>NUCLEOTIDE SEQUENCE [LARGE SCALE GENOMIC DNA]</scope>
    <source>
        <strain>IL1403</strain>
    </source>
</reference>
<evidence type="ECO:0000255" key="1">
    <source>
        <dbReference type="HAMAP-Rule" id="MF_00948"/>
    </source>
</evidence>
<proteinExistence type="inferred from homology"/>
<feature type="chain" id="PRO_0000113932" description="Transcription termination/antitermination protein NusG">
    <location>
        <begin position="1"/>
        <end position="185"/>
    </location>
</feature>
<feature type="domain" description="KOW" evidence="1">
    <location>
        <begin position="134"/>
        <end position="164"/>
    </location>
</feature>
<keyword id="KW-1185">Reference proteome</keyword>
<keyword id="KW-0804">Transcription</keyword>
<keyword id="KW-0889">Transcription antitermination</keyword>
<keyword id="KW-0805">Transcription regulation</keyword>
<keyword id="KW-0806">Transcription termination</keyword>
<protein>
    <recommendedName>
        <fullName evidence="1">Transcription termination/antitermination protein NusG</fullName>
    </recommendedName>
</protein>
<comment type="function">
    <text evidence="1">Participates in transcription elongation, termination and antitermination.</text>
</comment>
<comment type="similarity">
    <text evidence="1">Belongs to the NusG family.</text>
</comment>
<dbReference type="EMBL" id="AE005176">
    <property type="protein sequence ID" value="AAK06202.1"/>
    <property type="molecule type" value="Genomic_DNA"/>
</dbReference>
<dbReference type="PIR" id="H86887">
    <property type="entry name" value="H86887"/>
</dbReference>
<dbReference type="RefSeq" id="NP_268261.1">
    <property type="nucleotide sequence ID" value="NC_002662.1"/>
</dbReference>
<dbReference type="RefSeq" id="WP_003129977.1">
    <property type="nucleotide sequence ID" value="NC_002662.1"/>
</dbReference>
<dbReference type="SMR" id="Q9CDV7"/>
<dbReference type="PaxDb" id="272623-L157316"/>
<dbReference type="EnsemblBacteria" id="AAK06202">
    <property type="protein sequence ID" value="AAK06202"/>
    <property type="gene ID" value="L157316"/>
</dbReference>
<dbReference type="GeneID" id="89634451"/>
<dbReference type="KEGG" id="lla:L157316"/>
<dbReference type="PATRIC" id="fig|272623.7.peg.2263"/>
<dbReference type="eggNOG" id="COG0250">
    <property type="taxonomic scope" value="Bacteria"/>
</dbReference>
<dbReference type="HOGENOM" id="CLU_067287_1_1_9"/>
<dbReference type="OrthoDB" id="9809075at2"/>
<dbReference type="Proteomes" id="UP000002196">
    <property type="component" value="Chromosome"/>
</dbReference>
<dbReference type="GO" id="GO:0005829">
    <property type="term" value="C:cytosol"/>
    <property type="evidence" value="ECO:0007669"/>
    <property type="project" value="TreeGrafter"/>
</dbReference>
<dbReference type="GO" id="GO:0006353">
    <property type="term" value="P:DNA-templated transcription termination"/>
    <property type="evidence" value="ECO:0007669"/>
    <property type="project" value="UniProtKB-UniRule"/>
</dbReference>
<dbReference type="GO" id="GO:0032784">
    <property type="term" value="P:regulation of DNA-templated transcription elongation"/>
    <property type="evidence" value="ECO:0007669"/>
    <property type="project" value="InterPro"/>
</dbReference>
<dbReference type="GO" id="GO:0031564">
    <property type="term" value="P:transcription antitermination"/>
    <property type="evidence" value="ECO:0007669"/>
    <property type="project" value="UniProtKB-UniRule"/>
</dbReference>
<dbReference type="GO" id="GO:0140673">
    <property type="term" value="P:transcription elongation-coupled chromatin remodeling"/>
    <property type="evidence" value="ECO:0007669"/>
    <property type="project" value="InterPro"/>
</dbReference>
<dbReference type="CDD" id="cd06091">
    <property type="entry name" value="KOW_NusG"/>
    <property type="match status" value="1"/>
</dbReference>
<dbReference type="CDD" id="cd09891">
    <property type="entry name" value="NGN_Bact_1"/>
    <property type="match status" value="1"/>
</dbReference>
<dbReference type="FunFam" id="3.30.70.940:FF:000002">
    <property type="entry name" value="Transcription termination/antitermination protein NusG"/>
    <property type="match status" value="1"/>
</dbReference>
<dbReference type="Gene3D" id="2.30.30.30">
    <property type="match status" value="1"/>
</dbReference>
<dbReference type="Gene3D" id="3.30.70.940">
    <property type="entry name" value="NusG, N-terminal domain"/>
    <property type="match status" value="1"/>
</dbReference>
<dbReference type="HAMAP" id="MF_00948">
    <property type="entry name" value="NusG"/>
    <property type="match status" value="1"/>
</dbReference>
<dbReference type="InterPro" id="IPR005824">
    <property type="entry name" value="KOW"/>
</dbReference>
<dbReference type="InterPro" id="IPR047050">
    <property type="entry name" value="NGN"/>
</dbReference>
<dbReference type="InterPro" id="IPR006645">
    <property type="entry name" value="NGN-like_dom"/>
</dbReference>
<dbReference type="InterPro" id="IPR036735">
    <property type="entry name" value="NGN_dom_sf"/>
</dbReference>
<dbReference type="InterPro" id="IPR043425">
    <property type="entry name" value="NusG-like"/>
</dbReference>
<dbReference type="InterPro" id="IPR014722">
    <property type="entry name" value="Rib_uL2_dom2"/>
</dbReference>
<dbReference type="InterPro" id="IPR001062">
    <property type="entry name" value="Transcrpt_antiterm_NusG"/>
</dbReference>
<dbReference type="InterPro" id="IPR015869">
    <property type="entry name" value="Transcrpt_antiterm_NusG_bac_CS"/>
</dbReference>
<dbReference type="InterPro" id="IPR008991">
    <property type="entry name" value="Translation_prot_SH3-like_sf"/>
</dbReference>
<dbReference type="NCBIfam" id="TIGR00922">
    <property type="entry name" value="nusG"/>
    <property type="match status" value="1"/>
</dbReference>
<dbReference type="PANTHER" id="PTHR30265">
    <property type="entry name" value="RHO-INTERACTING TRANSCRIPTION TERMINATION FACTOR NUSG"/>
    <property type="match status" value="1"/>
</dbReference>
<dbReference type="PANTHER" id="PTHR30265:SF2">
    <property type="entry name" value="TRANSCRIPTION TERMINATION_ANTITERMINATION PROTEIN NUSG"/>
    <property type="match status" value="1"/>
</dbReference>
<dbReference type="Pfam" id="PF00467">
    <property type="entry name" value="KOW"/>
    <property type="match status" value="1"/>
</dbReference>
<dbReference type="Pfam" id="PF02357">
    <property type="entry name" value="NusG"/>
    <property type="match status" value="1"/>
</dbReference>
<dbReference type="PRINTS" id="PR00338">
    <property type="entry name" value="NUSGTNSCPFCT"/>
</dbReference>
<dbReference type="SMART" id="SM00739">
    <property type="entry name" value="KOW"/>
    <property type="match status" value="1"/>
</dbReference>
<dbReference type="SMART" id="SM00738">
    <property type="entry name" value="NGN"/>
    <property type="match status" value="1"/>
</dbReference>
<dbReference type="SUPFAM" id="SSF82679">
    <property type="entry name" value="N-utilization substance G protein NusG, N-terminal domain"/>
    <property type="match status" value="1"/>
</dbReference>
<dbReference type="SUPFAM" id="SSF50104">
    <property type="entry name" value="Translation proteins SH3-like domain"/>
    <property type="match status" value="1"/>
</dbReference>
<dbReference type="PROSITE" id="PS01014">
    <property type="entry name" value="NUSG"/>
    <property type="match status" value="1"/>
</dbReference>